<comment type="function">
    <text evidence="1">Plays an important role in the removal of damaged mitochondria via mitophagy by controlling the stability and localization of RAB7A. Required for the recruitment of RAB7A and ATG9A vesicles to damaged mitochondria and promotes the stability of RAB7A by inhibiting its proteasomal degradation during mitophagy.</text>
</comment>
<comment type="subunit">
    <text evidence="1">Interacts with the MON1A-CCZ1B complex (PubMed:34432599). Interacts with GDP-bound RAB7A and promotes its interaction with the MON1A-CCZ1B complex (PubMed:34432599).</text>
</comment>
<comment type="interaction">
    <interactant intactId="EBI-11353503">
        <id>A6NDU8</id>
    </interactant>
    <interactant intactId="EBI-3921347">
        <id>P51687</id>
        <label>SUOX</label>
    </interactant>
    <organismsDiffer>false</organismsDiffer>
    <experiments>3</experiments>
</comment>
<comment type="subcellular location">
    <subcellularLocation>
        <location evidence="1">Cytoplasm</location>
        <location evidence="1">Cytosol</location>
    </subcellularLocation>
</comment>
<comment type="similarity">
    <text evidence="2">Belongs to the RIMOC1 family.</text>
</comment>
<comment type="sequence caution" evidence="2">
    <conflict type="miscellaneous discrepancy">
        <sequence resource="EMBL-CDS" id="AAI31722"/>
    </conflict>
    <text>Unlikely isoform. Aberrant splice sites.</text>
</comment>
<organism>
    <name type="scientific">Homo sapiens</name>
    <name type="common">Human</name>
    <dbReference type="NCBI Taxonomy" id="9606"/>
    <lineage>
        <taxon>Eukaryota</taxon>
        <taxon>Metazoa</taxon>
        <taxon>Chordata</taxon>
        <taxon>Craniata</taxon>
        <taxon>Vertebrata</taxon>
        <taxon>Euteleostomi</taxon>
        <taxon>Mammalia</taxon>
        <taxon>Eutheria</taxon>
        <taxon>Euarchontoglires</taxon>
        <taxon>Primates</taxon>
        <taxon>Haplorrhini</taxon>
        <taxon>Catarrhini</taxon>
        <taxon>Hominidae</taxon>
        <taxon>Homo</taxon>
    </lineage>
</organism>
<accession>A6NDU8</accession>
<accession>A2RRM9</accession>
<keyword id="KW-0007">Acetylation</keyword>
<keyword id="KW-0072">Autophagy</keyword>
<keyword id="KW-0963">Cytoplasm</keyword>
<keyword id="KW-1267">Proteomics identification</keyword>
<keyword id="KW-1185">Reference proteome</keyword>
<dbReference type="EMBL" id="AC034222">
    <property type="status" value="NOT_ANNOTATED_CDS"/>
    <property type="molecule type" value="Genomic_DNA"/>
</dbReference>
<dbReference type="EMBL" id="CH471119">
    <property type="protein sequence ID" value="EAW56017.1"/>
    <property type="molecule type" value="Genomic_DNA"/>
</dbReference>
<dbReference type="EMBL" id="BC131721">
    <property type="protein sequence ID" value="AAI31722.1"/>
    <property type="status" value="ALT_SEQ"/>
    <property type="molecule type" value="mRNA"/>
</dbReference>
<dbReference type="CCDS" id="CCDS34151.1"/>
<dbReference type="RefSeq" id="NP_787117.3">
    <property type="nucleotide sequence ID" value="NM_175921.5"/>
</dbReference>
<dbReference type="SMR" id="A6NDU8"/>
<dbReference type="BioGRID" id="130165">
    <property type="interactions" value="27"/>
</dbReference>
<dbReference type="FunCoup" id="A6NDU8">
    <property type="interactions" value="3413"/>
</dbReference>
<dbReference type="IntAct" id="A6NDU8">
    <property type="interactions" value="10"/>
</dbReference>
<dbReference type="STRING" id="9606.ENSP00000371061"/>
<dbReference type="GlyGen" id="A6NDU8">
    <property type="glycosylation" value="1 site, 1 O-linked glycan (1 site)"/>
</dbReference>
<dbReference type="iPTMnet" id="A6NDU8"/>
<dbReference type="MetOSite" id="A6NDU8"/>
<dbReference type="PhosphoSitePlus" id="A6NDU8"/>
<dbReference type="BioMuta" id="C5orf51"/>
<dbReference type="jPOST" id="A6NDU8"/>
<dbReference type="MassIVE" id="A6NDU8"/>
<dbReference type="PaxDb" id="9606-ENSP00000371061"/>
<dbReference type="PeptideAtlas" id="A6NDU8"/>
<dbReference type="ProteomicsDB" id="929"/>
<dbReference type="Pumba" id="A6NDU8"/>
<dbReference type="Antibodypedia" id="23213">
    <property type="antibodies" value="63 antibodies from 13 providers"/>
</dbReference>
<dbReference type="DNASU" id="285636"/>
<dbReference type="Ensembl" id="ENST00000381647.7">
    <property type="protein sequence ID" value="ENSP00000371061.2"/>
    <property type="gene ID" value="ENSG00000205765.10"/>
</dbReference>
<dbReference type="GeneID" id="285636"/>
<dbReference type="KEGG" id="hsa:285636"/>
<dbReference type="MANE-Select" id="ENST00000381647.7">
    <property type="protein sequence ID" value="ENSP00000371061.2"/>
    <property type="RefSeq nucleotide sequence ID" value="NM_175921.6"/>
    <property type="RefSeq protein sequence ID" value="NP_787117.3"/>
</dbReference>
<dbReference type="UCSC" id="uc003jmo.4">
    <property type="organism name" value="human"/>
</dbReference>
<dbReference type="AGR" id="HGNC:27750"/>
<dbReference type="CTD" id="285636"/>
<dbReference type="GeneCards" id="RIMOC1"/>
<dbReference type="HGNC" id="HGNC:27750">
    <property type="gene designation" value="RIMOC1"/>
</dbReference>
<dbReference type="HPA" id="ENSG00000205765">
    <property type="expression patterns" value="Low tissue specificity"/>
</dbReference>
<dbReference type="MIM" id="620266">
    <property type="type" value="gene"/>
</dbReference>
<dbReference type="neXtProt" id="NX_A6NDU8"/>
<dbReference type="OpenTargets" id="ENSG00000205765"/>
<dbReference type="VEuPathDB" id="HostDB:ENSG00000205765"/>
<dbReference type="eggNOG" id="ENOG502QW9A">
    <property type="taxonomic scope" value="Eukaryota"/>
</dbReference>
<dbReference type="GeneTree" id="ENSGT00390000011383"/>
<dbReference type="HOGENOM" id="CLU_082742_0_0_1"/>
<dbReference type="InParanoid" id="A6NDU8"/>
<dbReference type="OMA" id="NEGKEHP"/>
<dbReference type="OrthoDB" id="6135810at2759"/>
<dbReference type="PAN-GO" id="A6NDU8">
    <property type="GO annotations" value="0 GO annotations based on evolutionary models"/>
</dbReference>
<dbReference type="PhylomeDB" id="A6NDU8"/>
<dbReference type="TreeFam" id="TF331577"/>
<dbReference type="PathwayCommons" id="A6NDU8"/>
<dbReference type="SignaLink" id="A6NDU8"/>
<dbReference type="BioGRID-ORCS" id="285636">
    <property type="hits" value="10 hits in 1129 CRISPR screens"/>
</dbReference>
<dbReference type="ChiTaRS" id="C5orf51">
    <property type="organism name" value="human"/>
</dbReference>
<dbReference type="GenomeRNAi" id="285636"/>
<dbReference type="Pharos" id="A6NDU8">
    <property type="development level" value="Tdark"/>
</dbReference>
<dbReference type="PRO" id="PR:A6NDU8"/>
<dbReference type="Proteomes" id="UP000005640">
    <property type="component" value="Chromosome 5"/>
</dbReference>
<dbReference type="RNAct" id="A6NDU8">
    <property type="molecule type" value="protein"/>
</dbReference>
<dbReference type="Bgee" id="ENSG00000205765">
    <property type="expression patterns" value="Expressed in esophagus squamous epithelium and 197 other cell types or tissues"/>
</dbReference>
<dbReference type="ExpressionAtlas" id="A6NDU8">
    <property type="expression patterns" value="baseline and differential"/>
</dbReference>
<dbReference type="GO" id="GO:0005829">
    <property type="term" value="C:cytosol"/>
    <property type="evidence" value="ECO:0000314"/>
    <property type="project" value="UniProtKB"/>
</dbReference>
<dbReference type="GO" id="GO:0005654">
    <property type="term" value="C:nucleoplasm"/>
    <property type="evidence" value="ECO:0000314"/>
    <property type="project" value="HPA"/>
</dbReference>
<dbReference type="GO" id="GO:0000423">
    <property type="term" value="P:mitophagy"/>
    <property type="evidence" value="ECO:0000315"/>
    <property type="project" value="UniProtKB"/>
</dbReference>
<dbReference type="InterPro" id="IPR037657">
    <property type="entry name" value="RIMC1"/>
</dbReference>
<dbReference type="PANTHER" id="PTHR28494:SF1">
    <property type="entry name" value="RAB7A-INTERACTING MON1-CCZ1 COMPLEX SUBUNIT 1"/>
    <property type="match status" value="1"/>
</dbReference>
<dbReference type="PANTHER" id="PTHR28494">
    <property type="entry name" value="UPF0600 PROTEIN C5ORF51"/>
    <property type="match status" value="1"/>
</dbReference>
<dbReference type="Pfam" id="PF17716">
    <property type="entry name" value="RIMC1"/>
    <property type="match status" value="1"/>
</dbReference>
<evidence type="ECO:0000269" key="1">
    <source>
    </source>
</evidence>
<evidence type="ECO:0000305" key="2"/>
<evidence type="ECO:0000312" key="3">
    <source>
        <dbReference type="HGNC" id="HGNC:27750"/>
    </source>
</evidence>
<evidence type="ECO:0007744" key="4">
    <source>
    </source>
</evidence>
<gene>
    <name evidence="3" type="primary">RIMOC1</name>
    <name type="synonym">C5orf51</name>
</gene>
<proteinExistence type="evidence at protein level"/>
<reference key="1">
    <citation type="journal article" date="2004" name="Nature">
        <title>The DNA sequence and comparative analysis of human chromosome 5.</title>
        <authorList>
            <person name="Schmutz J."/>
            <person name="Martin J."/>
            <person name="Terry A."/>
            <person name="Couronne O."/>
            <person name="Grimwood J."/>
            <person name="Lowry S."/>
            <person name="Gordon L.A."/>
            <person name="Scott D."/>
            <person name="Xie G."/>
            <person name="Huang W."/>
            <person name="Hellsten U."/>
            <person name="Tran-Gyamfi M."/>
            <person name="She X."/>
            <person name="Prabhakar S."/>
            <person name="Aerts A."/>
            <person name="Altherr M."/>
            <person name="Bajorek E."/>
            <person name="Black S."/>
            <person name="Branscomb E."/>
            <person name="Caoile C."/>
            <person name="Challacombe J.F."/>
            <person name="Chan Y.M."/>
            <person name="Denys M."/>
            <person name="Detter J.C."/>
            <person name="Escobar J."/>
            <person name="Flowers D."/>
            <person name="Fotopulos D."/>
            <person name="Glavina T."/>
            <person name="Gomez M."/>
            <person name="Gonzales E."/>
            <person name="Goodstein D."/>
            <person name="Grigoriev I."/>
            <person name="Groza M."/>
            <person name="Hammon N."/>
            <person name="Hawkins T."/>
            <person name="Haydu L."/>
            <person name="Israni S."/>
            <person name="Jett J."/>
            <person name="Kadner K."/>
            <person name="Kimball H."/>
            <person name="Kobayashi A."/>
            <person name="Lopez F."/>
            <person name="Lou Y."/>
            <person name="Martinez D."/>
            <person name="Medina C."/>
            <person name="Morgan J."/>
            <person name="Nandkeshwar R."/>
            <person name="Noonan J.P."/>
            <person name="Pitluck S."/>
            <person name="Pollard M."/>
            <person name="Predki P."/>
            <person name="Priest J."/>
            <person name="Ramirez L."/>
            <person name="Retterer J."/>
            <person name="Rodriguez A."/>
            <person name="Rogers S."/>
            <person name="Salamov A."/>
            <person name="Salazar A."/>
            <person name="Thayer N."/>
            <person name="Tice H."/>
            <person name="Tsai M."/>
            <person name="Ustaszewska A."/>
            <person name="Vo N."/>
            <person name="Wheeler J."/>
            <person name="Wu K."/>
            <person name="Yang J."/>
            <person name="Dickson M."/>
            <person name="Cheng J.-F."/>
            <person name="Eichler E.E."/>
            <person name="Olsen A."/>
            <person name="Pennacchio L.A."/>
            <person name="Rokhsar D.S."/>
            <person name="Richardson P."/>
            <person name="Lucas S.M."/>
            <person name="Myers R.M."/>
            <person name="Rubin E.M."/>
        </authorList>
    </citation>
    <scope>NUCLEOTIDE SEQUENCE [LARGE SCALE GENOMIC DNA]</scope>
</reference>
<reference key="2">
    <citation type="submission" date="2005-07" db="EMBL/GenBank/DDBJ databases">
        <authorList>
            <person name="Mural R.J."/>
            <person name="Istrail S."/>
            <person name="Sutton G.G."/>
            <person name="Florea L."/>
            <person name="Halpern A.L."/>
            <person name="Mobarry C.M."/>
            <person name="Lippert R."/>
            <person name="Walenz B."/>
            <person name="Shatkay H."/>
            <person name="Dew I."/>
            <person name="Miller J.R."/>
            <person name="Flanigan M.J."/>
            <person name="Edwards N.J."/>
            <person name="Bolanos R."/>
            <person name="Fasulo D."/>
            <person name="Halldorsson B.V."/>
            <person name="Hannenhalli S."/>
            <person name="Turner R."/>
            <person name="Yooseph S."/>
            <person name="Lu F."/>
            <person name="Nusskern D.R."/>
            <person name="Shue B.C."/>
            <person name="Zheng X.H."/>
            <person name="Zhong F."/>
            <person name="Delcher A.L."/>
            <person name="Huson D.H."/>
            <person name="Kravitz S.A."/>
            <person name="Mouchard L."/>
            <person name="Reinert K."/>
            <person name="Remington K.A."/>
            <person name="Clark A.G."/>
            <person name="Waterman M.S."/>
            <person name="Eichler E.E."/>
            <person name="Adams M.D."/>
            <person name="Hunkapiller M.W."/>
            <person name="Myers E.W."/>
            <person name="Venter J.C."/>
        </authorList>
    </citation>
    <scope>NUCLEOTIDE SEQUENCE [LARGE SCALE GENOMIC DNA]</scope>
</reference>
<reference key="3">
    <citation type="journal article" date="2004" name="Genome Res.">
        <title>The status, quality, and expansion of the NIH full-length cDNA project: the Mammalian Gene Collection (MGC).</title>
        <authorList>
            <consortium name="The MGC Project Team"/>
        </authorList>
    </citation>
    <scope>NUCLEOTIDE SEQUENCE [LARGE SCALE MRNA]</scope>
</reference>
<reference key="4">
    <citation type="journal article" date="2011" name="BMC Syst. Biol.">
        <title>Initial characterization of the human central proteome.</title>
        <authorList>
            <person name="Burkard T.R."/>
            <person name="Planyavsky M."/>
            <person name="Kaupe I."/>
            <person name="Breitwieser F.P."/>
            <person name="Buerckstuemmer T."/>
            <person name="Bennett K.L."/>
            <person name="Superti-Furga G."/>
            <person name="Colinge J."/>
        </authorList>
    </citation>
    <scope>IDENTIFICATION BY MASS SPECTROMETRY [LARGE SCALE ANALYSIS]</scope>
</reference>
<reference key="5">
    <citation type="journal article" date="2012" name="Proc. Natl. Acad. Sci. U.S.A.">
        <title>N-terminal acetylome analyses and functional insights of the N-terminal acetyltransferase NatB.</title>
        <authorList>
            <person name="Van Damme P."/>
            <person name="Lasa M."/>
            <person name="Polevoda B."/>
            <person name="Gazquez C."/>
            <person name="Elosegui-Artola A."/>
            <person name="Kim D.S."/>
            <person name="De Juan-Pardo E."/>
            <person name="Demeyer K."/>
            <person name="Hole K."/>
            <person name="Larrea E."/>
            <person name="Timmerman E."/>
            <person name="Prieto J."/>
            <person name="Arnesen T."/>
            <person name="Sherman F."/>
            <person name="Gevaert K."/>
            <person name="Aldabe R."/>
        </authorList>
    </citation>
    <scope>ACETYLATION [LARGE SCALE ANALYSIS] AT ALA-2</scope>
    <scope>CLEAVAGE OF INITIATOR METHIONINE [LARGE SCALE ANALYSIS]</scope>
    <scope>IDENTIFICATION BY MASS SPECTROMETRY [LARGE SCALE ANALYSIS]</scope>
</reference>
<reference key="6">
    <citation type="journal article" date="2022" name="Autophagy">
        <title>C5orf51 is a component of the MON1-CCZ1 complex and controls RAB7A localization and stability during mitophagy.</title>
        <authorList>
            <person name="Yan B.R."/>
            <person name="Li T."/>
            <person name="Coyaud E."/>
            <person name="Laurent E.M.N."/>
            <person name="St-Germain J."/>
            <person name="Zhou Y."/>
            <person name="Kim P.K."/>
            <person name="Raught B."/>
            <person name="Brumell J.H."/>
        </authorList>
    </citation>
    <scope>FUNCTION</scope>
    <scope>INTERACTION WITH MON1A-CCZ1B COMPLEX AND RAB7A</scope>
    <scope>SUBCELLULAR LOCATION</scope>
</reference>
<name>RIMC1_HUMAN</name>
<protein>
    <recommendedName>
        <fullName evidence="2">RAB7A-interacting MON1-CCZ1 complex subunit 1</fullName>
    </recommendedName>
    <alternativeName>
        <fullName>UPF0600 protein C5orf51</fullName>
    </alternativeName>
</protein>
<sequence>MAAAVSSVVRRVEELGDLAQAHIQQLSEAAGEDDHFLIRASAALEKLKLLCGEEKECSNPSNLLELYTQAILDMTYFEENKLVDEDFPEDSSSQKVKELISFLSEPEILVKENNMHPKHCNLLGDELLECLSWRRGALLYMYCHSLTKRREWLLRKSSLLKKYLLDGISYLLQMLNYRCPIQLNEGVSFQDLDTAKLLSAGIFSDIHLLAMMYSGEMCYWGSKYCADQQPENHEVDTSVSGAGCTTYKEPLDFREVGEKILKKYVSVCEGPLKEQEWNTTNAKQILNFFHHRCN</sequence>
<feature type="initiator methionine" description="Removed" evidence="4">
    <location>
        <position position="1"/>
    </location>
</feature>
<feature type="chain" id="PRO_0000341214" description="RAB7A-interacting MON1-CCZ1 complex subunit 1">
    <location>
        <begin position="2"/>
        <end position="294"/>
    </location>
</feature>
<feature type="modified residue" description="N-acetylalanine" evidence="4">
    <location>
        <position position="2"/>
    </location>
</feature>
<feature type="sequence variant" id="VAR_044032" description="In dbSNP:rs12520325.">
    <original>Q</original>
    <variation>H</variation>
    <location>
        <position position="20"/>
    </location>
</feature>